<evidence type="ECO:0000255" key="1">
    <source>
        <dbReference type="HAMAP-Rule" id="MF_01207"/>
    </source>
</evidence>
<sequence>MRLTAKQVTWLKVCLHLAGLLPFLWLVWAINHGGLGADPVKDIQHFTGLTALKFLLAALLITPLARYAKQPLLIRTRRLLGLWCFAWATLHLTSYALLELGVNNLALLGKELITRPYLTLGIISWVILLALAFTSTQSMQRKLGKHWQQLHNFVYLVAILAPIHYLWSVKIISPQPLIYAGLAVLLLALRYKKLLSLFNRLRKQAHNKLSL</sequence>
<name>MSRQ_ECO27</name>
<protein>
    <recommendedName>
        <fullName evidence="1">Protein-methionine-sulfoxide reductase heme-binding subunit MsrQ</fullName>
    </recommendedName>
    <alternativeName>
        <fullName evidence="1">Flavocytochrome MsrQ</fullName>
    </alternativeName>
</protein>
<keyword id="KW-0997">Cell inner membrane</keyword>
<keyword id="KW-1003">Cell membrane</keyword>
<keyword id="KW-0249">Electron transport</keyword>
<keyword id="KW-0285">Flavoprotein</keyword>
<keyword id="KW-0288">FMN</keyword>
<keyword id="KW-0349">Heme</keyword>
<keyword id="KW-0408">Iron</keyword>
<keyword id="KW-0472">Membrane</keyword>
<keyword id="KW-0479">Metal-binding</keyword>
<keyword id="KW-1185">Reference proteome</keyword>
<keyword id="KW-0812">Transmembrane</keyword>
<keyword id="KW-1133">Transmembrane helix</keyword>
<keyword id="KW-0813">Transport</keyword>
<feature type="chain" id="PRO_1000164661" description="Protein-methionine-sulfoxide reductase heme-binding subunit MsrQ">
    <location>
        <begin position="1"/>
        <end position="211"/>
    </location>
</feature>
<feature type="transmembrane region" description="Helical" evidence="1">
    <location>
        <begin position="45"/>
        <end position="65"/>
    </location>
</feature>
<feature type="transmembrane region" description="Helical" evidence="1">
    <location>
        <begin position="82"/>
        <end position="102"/>
    </location>
</feature>
<feature type="transmembrane region" description="Helical" evidence="1">
    <location>
        <begin position="116"/>
        <end position="136"/>
    </location>
</feature>
<feature type="transmembrane region" description="Helical" evidence="1">
    <location>
        <begin position="153"/>
        <end position="173"/>
    </location>
</feature>
<feature type="transmembrane region" description="Helical" evidence="1">
    <location>
        <begin position="178"/>
        <end position="198"/>
    </location>
</feature>
<organism>
    <name type="scientific">Escherichia coli O127:H6 (strain E2348/69 / EPEC)</name>
    <dbReference type="NCBI Taxonomy" id="574521"/>
    <lineage>
        <taxon>Bacteria</taxon>
        <taxon>Pseudomonadati</taxon>
        <taxon>Pseudomonadota</taxon>
        <taxon>Gammaproteobacteria</taxon>
        <taxon>Enterobacterales</taxon>
        <taxon>Enterobacteriaceae</taxon>
        <taxon>Escherichia</taxon>
    </lineage>
</organism>
<reference key="1">
    <citation type="journal article" date="2009" name="J. Bacteriol.">
        <title>Complete genome sequence and comparative genome analysis of enteropathogenic Escherichia coli O127:H6 strain E2348/69.</title>
        <authorList>
            <person name="Iguchi A."/>
            <person name="Thomson N.R."/>
            <person name="Ogura Y."/>
            <person name="Saunders D."/>
            <person name="Ooka T."/>
            <person name="Henderson I.R."/>
            <person name="Harris D."/>
            <person name="Asadulghani M."/>
            <person name="Kurokawa K."/>
            <person name="Dean P."/>
            <person name="Kenny B."/>
            <person name="Quail M.A."/>
            <person name="Thurston S."/>
            <person name="Dougan G."/>
            <person name="Hayashi T."/>
            <person name="Parkhill J."/>
            <person name="Frankel G."/>
        </authorList>
    </citation>
    <scope>NUCLEOTIDE SEQUENCE [LARGE SCALE GENOMIC DNA]</scope>
    <source>
        <strain>E2348/69 / EPEC</strain>
    </source>
</reference>
<comment type="function">
    <text evidence="1">Part of the MsrPQ system that repairs oxidized periplasmic proteins containing methionine sulfoxide residues (Met-O), using respiratory chain electrons. Thus protects these proteins from oxidative-stress damage caused by reactive species of oxygen and chlorine generated by the host defense mechanisms. MsrPQ is essential for the maintenance of envelope integrity under bleach stress, rescuing a wide series of structurally unrelated periplasmic proteins from methionine oxidation, including the primary periplasmic chaperone SurA and the lipoprotein Pal. MsrQ provides electrons for reduction to the reductase catalytic subunit MsrP, using the quinone pool of the respiratory chain.</text>
</comment>
<comment type="cofactor">
    <cofactor evidence="1">
        <name>FMN</name>
        <dbReference type="ChEBI" id="CHEBI:58210"/>
    </cofactor>
    <text evidence="1">Binds 1 FMN per subunit.</text>
</comment>
<comment type="cofactor">
    <cofactor evidence="1">
        <name>heme b</name>
        <dbReference type="ChEBI" id="CHEBI:60344"/>
    </cofactor>
    <text evidence="1">Binds 1 heme b (iron(II)-protoporphyrin IX) group per subunit.</text>
</comment>
<comment type="subunit">
    <text evidence="1">Heterodimer of a catalytic subunit (MsrP) and a heme-binding subunit (MsrQ).</text>
</comment>
<comment type="subcellular location">
    <subcellularLocation>
        <location evidence="1">Cell inner membrane</location>
        <topology evidence="1">Multi-pass membrane protein</topology>
    </subcellularLocation>
</comment>
<comment type="similarity">
    <text evidence="1">Belongs to the MsrQ family.</text>
</comment>
<accession>B7USY2</accession>
<gene>
    <name evidence="1" type="primary">msrQ</name>
    <name type="ordered locus">E2348C_2083</name>
</gene>
<dbReference type="EMBL" id="FM180568">
    <property type="protein sequence ID" value="CAS09631.1"/>
    <property type="molecule type" value="Genomic_DNA"/>
</dbReference>
<dbReference type="RefSeq" id="WP_001240076.1">
    <property type="nucleotide sequence ID" value="NC_011601.1"/>
</dbReference>
<dbReference type="SMR" id="B7USY2"/>
<dbReference type="KEGG" id="ecg:E2348C_2083"/>
<dbReference type="HOGENOM" id="CLU_080662_0_1_6"/>
<dbReference type="Proteomes" id="UP000008205">
    <property type="component" value="Chromosome"/>
</dbReference>
<dbReference type="GO" id="GO:0005886">
    <property type="term" value="C:plasma membrane"/>
    <property type="evidence" value="ECO:0007669"/>
    <property type="project" value="UniProtKB-SubCell"/>
</dbReference>
<dbReference type="GO" id="GO:0009055">
    <property type="term" value="F:electron transfer activity"/>
    <property type="evidence" value="ECO:0007669"/>
    <property type="project" value="UniProtKB-UniRule"/>
</dbReference>
<dbReference type="GO" id="GO:0010181">
    <property type="term" value="F:FMN binding"/>
    <property type="evidence" value="ECO:0007669"/>
    <property type="project" value="UniProtKB-UniRule"/>
</dbReference>
<dbReference type="GO" id="GO:0020037">
    <property type="term" value="F:heme binding"/>
    <property type="evidence" value="ECO:0007669"/>
    <property type="project" value="UniProtKB-UniRule"/>
</dbReference>
<dbReference type="GO" id="GO:0046872">
    <property type="term" value="F:metal ion binding"/>
    <property type="evidence" value="ECO:0007669"/>
    <property type="project" value="UniProtKB-KW"/>
</dbReference>
<dbReference type="GO" id="GO:0016679">
    <property type="term" value="F:oxidoreductase activity, acting on diphenols and related substances as donors"/>
    <property type="evidence" value="ECO:0007669"/>
    <property type="project" value="TreeGrafter"/>
</dbReference>
<dbReference type="GO" id="GO:0030091">
    <property type="term" value="P:protein repair"/>
    <property type="evidence" value="ECO:0007669"/>
    <property type="project" value="UniProtKB-UniRule"/>
</dbReference>
<dbReference type="HAMAP" id="MF_01207">
    <property type="entry name" value="MsrQ"/>
    <property type="match status" value="1"/>
</dbReference>
<dbReference type="InterPro" id="IPR013130">
    <property type="entry name" value="Fe3_Rdtase_TM_dom"/>
</dbReference>
<dbReference type="InterPro" id="IPR022837">
    <property type="entry name" value="MsrQ-like"/>
</dbReference>
<dbReference type="NCBIfam" id="NF003830">
    <property type="entry name" value="PRK05419.1-1"/>
    <property type="match status" value="1"/>
</dbReference>
<dbReference type="NCBIfam" id="NF003831">
    <property type="entry name" value="PRK05419.1-2"/>
    <property type="match status" value="1"/>
</dbReference>
<dbReference type="NCBIfam" id="NF003832">
    <property type="entry name" value="PRK05419.1-4"/>
    <property type="match status" value="1"/>
</dbReference>
<dbReference type="PANTHER" id="PTHR36964">
    <property type="entry name" value="PROTEIN-METHIONINE-SULFOXIDE REDUCTASE HEME-BINDING SUBUNIT MSRQ"/>
    <property type="match status" value="1"/>
</dbReference>
<dbReference type="PANTHER" id="PTHR36964:SF1">
    <property type="entry name" value="PROTEIN-METHIONINE-SULFOXIDE REDUCTASE HEME-BINDING SUBUNIT MSRQ"/>
    <property type="match status" value="1"/>
</dbReference>
<dbReference type="Pfam" id="PF01794">
    <property type="entry name" value="Ferric_reduct"/>
    <property type="match status" value="1"/>
</dbReference>
<proteinExistence type="inferred from homology"/>